<feature type="chain" id="PRO_1000145305" description="ATP synthase subunit a">
    <location>
        <begin position="1"/>
        <end position="242"/>
    </location>
</feature>
<feature type="transmembrane region" description="Helical" evidence="1">
    <location>
        <begin position="21"/>
        <end position="41"/>
    </location>
</feature>
<feature type="transmembrane region" description="Helical" evidence="1">
    <location>
        <begin position="83"/>
        <end position="103"/>
    </location>
</feature>
<feature type="transmembrane region" description="Helical" evidence="1">
    <location>
        <begin position="117"/>
        <end position="137"/>
    </location>
</feature>
<feature type="transmembrane region" description="Helical" evidence="1">
    <location>
        <begin position="175"/>
        <end position="195"/>
    </location>
</feature>
<feature type="transmembrane region" description="Helical" evidence="1">
    <location>
        <begin position="198"/>
        <end position="218"/>
    </location>
</feature>
<organism>
    <name type="scientific">Staphylococcus aureus (strain JH1)</name>
    <dbReference type="NCBI Taxonomy" id="359787"/>
    <lineage>
        <taxon>Bacteria</taxon>
        <taxon>Bacillati</taxon>
        <taxon>Bacillota</taxon>
        <taxon>Bacilli</taxon>
        <taxon>Bacillales</taxon>
        <taxon>Staphylococcaceae</taxon>
        <taxon>Staphylococcus</taxon>
    </lineage>
</organism>
<proteinExistence type="inferred from homology"/>
<evidence type="ECO:0000255" key="1">
    <source>
        <dbReference type="HAMAP-Rule" id="MF_01393"/>
    </source>
</evidence>
<gene>
    <name evidence="1" type="primary">atpB</name>
    <name type="ordered locus">SaurJH1_2183</name>
</gene>
<name>ATP6_STAA2</name>
<comment type="function">
    <text evidence="1">Key component of the proton channel; it plays a direct role in the translocation of protons across the membrane.</text>
</comment>
<comment type="subunit">
    <text evidence="1">F-type ATPases have 2 components, CF(1) - the catalytic core - and CF(0) - the membrane proton channel. CF(1) has five subunits: alpha(3), beta(3), gamma(1), delta(1), epsilon(1). CF(0) has three main subunits: a(1), b(2) and c(9-12). The alpha and beta chains form an alternating ring which encloses part of the gamma chain. CF(1) is attached to CF(0) by a central stalk formed by the gamma and epsilon chains, while a peripheral stalk is formed by the delta and b chains.</text>
</comment>
<comment type="subcellular location">
    <subcellularLocation>
        <location evidence="1">Cell membrane</location>
        <topology evidence="1">Multi-pass membrane protein</topology>
    </subcellularLocation>
</comment>
<comment type="similarity">
    <text evidence="1">Belongs to the ATPase A chain family.</text>
</comment>
<sequence length="242" mass="27630">MDHKSPLVSWNLFGFDIVFNLSSILMILVTAFLVFLLAIICTRNLKKRPTGKQNFVEWIFDFVRGIIEGNMAWKKGGQFHFLAVTLILYIFIANMLGLPFSIVTKDHTLWWKSPTADATVTLTLSTTIILLTHFYGIKMRGTKQYLKGYVQPFWPLAIINVFEEFTSTLTLGLRLYGNIFAGEILLTLLAGLFFNEPAWGWIISIPGLIVWQAFSIFVGTIQAYIFIMLSMVYMSHKVADEH</sequence>
<reference key="1">
    <citation type="submission" date="2007-06" db="EMBL/GenBank/DDBJ databases">
        <title>Complete sequence of chromosome of Staphylococcus aureus subsp. aureus JH1.</title>
        <authorList>
            <consortium name="US DOE Joint Genome Institute"/>
            <person name="Copeland A."/>
            <person name="Lucas S."/>
            <person name="Lapidus A."/>
            <person name="Barry K."/>
            <person name="Detter J.C."/>
            <person name="Glavina del Rio T."/>
            <person name="Hammon N."/>
            <person name="Israni S."/>
            <person name="Dalin E."/>
            <person name="Tice H."/>
            <person name="Pitluck S."/>
            <person name="Chain P."/>
            <person name="Malfatti S."/>
            <person name="Shin M."/>
            <person name="Vergez L."/>
            <person name="Schmutz J."/>
            <person name="Larimer F."/>
            <person name="Land M."/>
            <person name="Hauser L."/>
            <person name="Kyrpides N."/>
            <person name="Ivanova N."/>
            <person name="Tomasz A."/>
            <person name="Richardson P."/>
        </authorList>
    </citation>
    <scope>NUCLEOTIDE SEQUENCE [LARGE SCALE GENOMIC DNA]</scope>
    <source>
        <strain>JH1</strain>
    </source>
</reference>
<protein>
    <recommendedName>
        <fullName evidence="1">ATP synthase subunit a</fullName>
    </recommendedName>
    <alternativeName>
        <fullName evidence="1">ATP synthase F0 sector subunit a</fullName>
    </alternativeName>
    <alternativeName>
        <fullName evidence="1">F-ATPase subunit 6</fullName>
    </alternativeName>
</protein>
<keyword id="KW-0066">ATP synthesis</keyword>
<keyword id="KW-1003">Cell membrane</keyword>
<keyword id="KW-0138">CF(0)</keyword>
<keyword id="KW-0375">Hydrogen ion transport</keyword>
<keyword id="KW-0406">Ion transport</keyword>
<keyword id="KW-0472">Membrane</keyword>
<keyword id="KW-0812">Transmembrane</keyword>
<keyword id="KW-1133">Transmembrane helix</keyword>
<keyword id="KW-0813">Transport</keyword>
<dbReference type="EMBL" id="CP000736">
    <property type="protein sequence ID" value="ABR53012.1"/>
    <property type="molecule type" value="Genomic_DNA"/>
</dbReference>
<dbReference type="SMR" id="A6U3J4"/>
<dbReference type="KEGG" id="sah:SaurJH1_2183"/>
<dbReference type="HOGENOM" id="CLU_041018_2_3_9"/>
<dbReference type="GO" id="GO:0005886">
    <property type="term" value="C:plasma membrane"/>
    <property type="evidence" value="ECO:0007669"/>
    <property type="project" value="UniProtKB-SubCell"/>
</dbReference>
<dbReference type="GO" id="GO:0045259">
    <property type="term" value="C:proton-transporting ATP synthase complex"/>
    <property type="evidence" value="ECO:0007669"/>
    <property type="project" value="UniProtKB-KW"/>
</dbReference>
<dbReference type="GO" id="GO:0046933">
    <property type="term" value="F:proton-transporting ATP synthase activity, rotational mechanism"/>
    <property type="evidence" value="ECO:0007669"/>
    <property type="project" value="UniProtKB-UniRule"/>
</dbReference>
<dbReference type="GO" id="GO:0042777">
    <property type="term" value="P:proton motive force-driven plasma membrane ATP synthesis"/>
    <property type="evidence" value="ECO:0007669"/>
    <property type="project" value="TreeGrafter"/>
</dbReference>
<dbReference type="CDD" id="cd00310">
    <property type="entry name" value="ATP-synt_Fo_a_6"/>
    <property type="match status" value="1"/>
</dbReference>
<dbReference type="FunFam" id="1.20.120.220:FF:000005">
    <property type="entry name" value="ATP synthase subunit a"/>
    <property type="match status" value="1"/>
</dbReference>
<dbReference type="Gene3D" id="1.20.120.220">
    <property type="entry name" value="ATP synthase, F0 complex, subunit A"/>
    <property type="match status" value="1"/>
</dbReference>
<dbReference type="HAMAP" id="MF_01393">
    <property type="entry name" value="ATP_synth_a_bact"/>
    <property type="match status" value="1"/>
</dbReference>
<dbReference type="InterPro" id="IPR045082">
    <property type="entry name" value="ATP_syn_F0_a_bact/chloroplast"/>
</dbReference>
<dbReference type="InterPro" id="IPR000568">
    <property type="entry name" value="ATP_synth_F0_asu"/>
</dbReference>
<dbReference type="InterPro" id="IPR023011">
    <property type="entry name" value="ATP_synth_F0_asu_AS"/>
</dbReference>
<dbReference type="InterPro" id="IPR035908">
    <property type="entry name" value="F0_ATP_A_sf"/>
</dbReference>
<dbReference type="NCBIfam" id="TIGR01131">
    <property type="entry name" value="ATP_synt_6_or_A"/>
    <property type="match status" value="1"/>
</dbReference>
<dbReference type="NCBIfam" id="NF004479">
    <property type="entry name" value="PRK05815.1-4"/>
    <property type="match status" value="1"/>
</dbReference>
<dbReference type="PANTHER" id="PTHR42823">
    <property type="entry name" value="ATP SYNTHASE SUBUNIT A, CHLOROPLASTIC"/>
    <property type="match status" value="1"/>
</dbReference>
<dbReference type="PANTHER" id="PTHR42823:SF3">
    <property type="entry name" value="ATP SYNTHASE SUBUNIT A, CHLOROPLASTIC"/>
    <property type="match status" value="1"/>
</dbReference>
<dbReference type="Pfam" id="PF00119">
    <property type="entry name" value="ATP-synt_A"/>
    <property type="match status" value="1"/>
</dbReference>
<dbReference type="PRINTS" id="PR00123">
    <property type="entry name" value="ATPASEA"/>
</dbReference>
<dbReference type="SUPFAM" id="SSF81336">
    <property type="entry name" value="F1F0 ATP synthase subunit A"/>
    <property type="match status" value="1"/>
</dbReference>
<dbReference type="PROSITE" id="PS00449">
    <property type="entry name" value="ATPASE_A"/>
    <property type="match status" value="1"/>
</dbReference>
<accession>A6U3J4</accession>